<keyword id="KW-0158">Chromosome</keyword>
<keyword id="KW-0227">DNA damage</keyword>
<keyword id="KW-0234">DNA repair</keyword>
<keyword id="KW-0238">DNA-binding</keyword>
<keyword id="KW-0539">Nucleus</keyword>
<keyword id="KW-1185">Reference proteome</keyword>
<keyword id="KW-0804">Transcription</keyword>
<keyword id="KW-0805">Transcription regulation</keyword>
<accession>Q6CVH3</accession>
<dbReference type="EMBL" id="CR382122">
    <property type="protein sequence ID" value="CAH02459.1"/>
    <property type="molecule type" value="Genomic_DNA"/>
</dbReference>
<dbReference type="RefSeq" id="XP_452066.1">
    <property type="nucleotide sequence ID" value="XM_452066.1"/>
</dbReference>
<dbReference type="SMR" id="Q6CVH3"/>
<dbReference type="FunCoup" id="Q6CVH3">
    <property type="interactions" value="468"/>
</dbReference>
<dbReference type="STRING" id="284590.Q6CVH3"/>
<dbReference type="PaxDb" id="284590-Q6CVH3"/>
<dbReference type="KEGG" id="kla:KLLA0_B12056g"/>
<dbReference type="eggNOG" id="KOG0381">
    <property type="taxonomic scope" value="Eukaryota"/>
</dbReference>
<dbReference type="HOGENOM" id="CLU_082854_10_3_1"/>
<dbReference type="InParanoid" id="Q6CVH3"/>
<dbReference type="OMA" id="MKNMGGK"/>
<dbReference type="Proteomes" id="UP000000598">
    <property type="component" value="Chromosome B"/>
</dbReference>
<dbReference type="GO" id="GO:0005694">
    <property type="term" value="C:chromosome"/>
    <property type="evidence" value="ECO:0007669"/>
    <property type="project" value="UniProtKB-SubCell"/>
</dbReference>
<dbReference type="GO" id="GO:0005634">
    <property type="term" value="C:nucleus"/>
    <property type="evidence" value="ECO:0007669"/>
    <property type="project" value="UniProtKB-SubCell"/>
</dbReference>
<dbReference type="GO" id="GO:0003677">
    <property type="term" value="F:DNA binding"/>
    <property type="evidence" value="ECO:0007669"/>
    <property type="project" value="UniProtKB-KW"/>
</dbReference>
<dbReference type="GO" id="GO:0006281">
    <property type="term" value="P:DNA repair"/>
    <property type="evidence" value="ECO:0007669"/>
    <property type="project" value="UniProtKB-KW"/>
</dbReference>
<dbReference type="CDD" id="cd01390">
    <property type="entry name" value="HMG-box_NHP6-like"/>
    <property type="match status" value="1"/>
</dbReference>
<dbReference type="FunFam" id="1.10.30.10:FF:000016">
    <property type="entry name" value="FACT complex subunit SSRP1"/>
    <property type="match status" value="1"/>
</dbReference>
<dbReference type="Gene3D" id="1.10.30.10">
    <property type="entry name" value="High mobility group box domain"/>
    <property type="match status" value="1"/>
</dbReference>
<dbReference type="InterPro" id="IPR009071">
    <property type="entry name" value="HMG_box_dom"/>
</dbReference>
<dbReference type="InterPro" id="IPR036910">
    <property type="entry name" value="HMG_box_dom_sf"/>
</dbReference>
<dbReference type="InterPro" id="IPR050342">
    <property type="entry name" value="HMGB"/>
</dbReference>
<dbReference type="PANTHER" id="PTHR48112">
    <property type="entry name" value="HIGH MOBILITY GROUP PROTEIN DSP1"/>
    <property type="match status" value="1"/>
</dbReference>
<dbReference type="PANTHER" id="PTHR48112:SF22">
    <property type="entry name" value="MITOCHONDRIAL TRANSCRIPTION FACTOR A, ISOFORM B"/>
    <property type="match status" value="1"/>
</dbReference>
<dbReference type="Pfam" id="PF00505">
    <property type="entry name" value="HMG_box"/>
    <property type="match status" value="1"/>
</dbReference>
<dbReference type="PRINTS" id="PR00886">
    <property type="entry name" value="HIGHMOBLTY12"/>
</dbReference>
<dbReference type="SMART" id="SM00398">
    <property type="entry name" value="HMG"/>
    <property type="match status" value="1"/>
</dbReference>
<dbReference type="SUPFAM" id="SSF47095">
    <property type="entry name" value="HMG-box"/>
    <property type="match status" value="1"/>
</dbReference>
<dbReference type="PROSITE" id="PS50118">
    <property type="entry name" value="HMG_BOX_2"/>
    <property type="match status" value="1"/>
</dbReference>
<proteinExistence type="inferred from homology"/>
<reference key="1">
    <citation type="journal article" date="2004" name="Nature">
        <title>Genome evolution in yeasts.</title>
        <authorList>
            <person name="Dujon B."/>
            <person name="Sherman D."/>
            <person name="Fischer G."/>
            <person name="Durrens P."/>
            <person name="Casaregola S."/>
            <person name="Lafontaine I."/>
            <person name="de Montigny J."/>
            <person name="Marck C."/>
            <person name="Neuveglise C."/>
            <person name="Talla E."/>
            <person name="Goffard N."/>
            <person name="Frangeul L."/>
            <person name="Aigle M."/>
            <person name="Anthouard V."/>
            <person name="Babour A."/>
            <person name="Barbe V."/>
            <person name="Barnay S."/>
            <person name="Blanchin S."/>
            <person name="Beckerich J.-M."/>
            <person name="Beyne E."/>
            <person name="Bleykasten C."/>
            <person name="Boisrame A."/>
            <person name="Boyer J."/>
            <person name="Cattolico L."/>
            <person name="Confanioleri F."/>
            <person name="de Daruvar A."/>
            <person name="Despons L."/>
            <person name="Fabre E."/>
            <person name="Fairhead C."/>
            <person name="Ferry-Dumazet H."/>
            <person name="Groppi A."/>
            <person name="Hantraye F."/>
            <person name="Hennequin C."/>
            <person name="Jauniaux N."/>
            <person name="Joyet P."/>
            <person name="Kachouri R."/>
            <person name="Kerrest A."/>
            <person name="Koszul R."/>
            <person name="Lemaire M."/>
            <person name="Lesur I."/>
            <person name="Ma L."/>
            <person name="Muller H."/>
            <person name="Nicaud J.-M."/>
            <person name="Nikolski M."/>
            <person name="Oztas S."/>
            <person name="Ozier-Kalogeropoulos O."/>
            <person name="Pellenz S."/>
            <person name="Potier S."/>
            <person name="Richard G.-F."/>
            <person name="Straub M.-L."/>
            <person name="Suleau A."/>
            <person name="Swennen D."/>
            <person name="Tekaia F."/>
            <person name="Wesolowski-Louvel M."/>
            <person name="Westhof E."/>
            <person name="Wirth B."/>
            <person name="Zeniou-Meyer M."/>
            <person name="Zivanovic Y."/>
            <person name="Bolotin-Fukuhara M."/>
            <person name="Thierry A."/>
            <person name="Bouchier C."/>
            <person name="Caudron B."/>
            <person name="Scarpelli C."/>
            <person name="Gaillardin C."/>
            <person name="Weissenbach J."/>
            <person name="Wincker P."/>
            <person name="Souciet J.-L."/>
        </authorList>
    </citation>
    <scope>NUCLEOTIDE SEQUENCE [LARGE SCALE GENOMIC DNA]</scope>
    <source>
        <strain>ATCC 8585 / CBS 2359 / DSM 70799 / NBRC 1267 / NRRL Y-1140 / WM37</strain>
    </source>
</reference>
<gene>
    <name type="primary">NHP6</name>
    <name type="ordered locus">KLLA0B12056g</name>
</gene>
<feature type="chain" id="PRO_0000245220" description="Non-histone chromosomal protein 6">
    <location>
        <begin position="1"/>
        <end position="93"/>
    </location>
</feature>
<feature type="DNA-binding region" description="HMG box" evidence="2">
    <location>
        <begin position="18"/>
        <end position="86"/>
    </location>
</feature>
<organism>
    <name type="scientific">Kluyveromyces lactis (strain ATCC 8585 / CBS 2359 / DSM 70799 / NBRC 1267 / NRRL Y-1140 / WM37)</name>
    <name type="common">Yeast</name>
    <name type="synonym">Candida sphaerica</name>
    <dbReference type="NCBI Taxonomy" id="284590"/>
    <lineage>
        <taxon>Eukaryota</taxon>
        <taxon>Fungi</taxon>
        <taxon>Dikarya</taxon>
        <taxon>Ascomycota</taxon>
        <taxon>Saccharomycotina</taxon>
        <taxon>Saccharomycetes</taxon>
        <taxon>Saccharomycetales</taxon>
        <taxon>Saccharomycetaceae</taxon>
        <taxon>Kluyveromyces</taxon>
    </lineage>
</organism>
<sequence>MAAPRKKTQRKKKDPNAPKRALSAYMFFANENRDIVRAENPGITFGQVGRILGEKWKALNEDEKAPYEAKAEADKKRYESEKELYIATKAQSE</sequence>
<name>NHP6_KLULA</name>
<protein>
    <recommendedName>
        <fullName>Non-histone chromosomal protein 6</fullName>
    </recommendedName>
</protein>
<evidence type="ECO:0000250" key="1"/>
<evidence type="ECO:0000255" key="2">
    <source>
        <dbReference type="PROSITE-ProRule" id="PRU00267"/>
    </source>
</evidence>
<evidence type="ECO:0000305" key="3"/>
<comment type="function">
    <text evidence="1">DNA-binding protein that induces severe bending of DNA. Required for DNA-binding by the FACT complex, a general chromatin factor that acts to reorganize nucleosomes. The FACT complex is involved in multiple processes that require DNA as a template such as mRNA elongation, DNA replication and DNA repair. Also augments the fidelity of transcription by RNA polymerase III independently of any role in the FACT complex (By similarity).</text>
</comment>
<comment type="subunit">
    <text evidence="1">Weakly associates with the stable SPT16-POB3 heterodimer to form the FACT complex.</text>
</comment>
<comment type="subcellular location">
    <subcellularLocation>
        <location evidence="2">Nucleus</location>
    </subcellularLocation>
    <subcellularLocation>
        <location evidence="1">Chromosome</location>
    </subcellularLocation>
</comment>
<comment type="similarity">
    <text evidence="3">Belongs to the NHP6 family.</text>
</comment>